<protein>
    <recommendedName>
        <fullName evidence="1">Crossover junction endodeoxyribonuclease RuvC</fullName>
        <ecNumber evidence="1">3.1.21.10</ecNumber>
    </recommendedName>
    <alternativeName>
        <fullName evidence="1">Holliday junction nuclease RuvC</fullName>
    </alternativeName>
    <alternativeName>
        <fullName evidence="1">Holliday junction resolvase RuvC</fullName>
    </alternativeName>
</protein>
<gene>
    <name evidence="1" type="primary">ruvC</name>
    <name type="ordered locus">BPSL2897</name>
</gene>
<comment type="function">
    <text evidence="1">The RuvA-RuvB-RuvC complex processes Holliday junction (HJ) DNA during genetic recombination and DNA repair. Endonuclease that resolves HJ intermediates. Cleaves cruciform DNA by making single-stranded nicks across the HJ at symmetrical positions within the homologous arms, yielding a 5'-phosphate and a 3'-hydroxyl group; requires a central core of homology in the junction. The consensus cleavage sequence is 5'-(A/T)TT(C/G)-3'. Cleavage occurs on the 3'-side of the TT dinucleotide at the point of strand exchange. HJ branch migration catalyzed by RuvA-RuvB allows RuvC to scan DNA until it finds its consensus sequence, where it cleaves and resolves the cruciform DNA.</text>
</comment>
<comment type="catalytic activity">
    <reaction evidence="1">
        <text>Endonucleolytic cleavage at a junction such as a reciprocal single-stranded crossover between two homologous DNA duplexes (Holliday junction).</text>
        <dbReference type="EC" id="3.1.21.10"/>
    </reaction>
</comment>
<comment type="cofactor">
    <cofactor evidence="1">
        <name>Mg(2+)</name>
        <dbReference type="ChEBI" id="CHEBI:18420"/>
    </cofactor>
    <text evidence="1">Binds 2 Mg(2+) ion per subunit.</text>
</comment>
<comment type="subunit">
    <text evidence="1">Homodimer which binds Holliday junction (HJ) DNA. The HJ becomes 2-fold symmetrical on binding to RuvC with unstacked arms; it has a different conformation from HJ DNA in complex with RuvA. In the full resolvosome a probable DNA-RuvA(4)-RuvB(12)-RuvC(2) complex forms which resolves the HJ.</text>
</comment>
<comment type="subcellular location">
    <subcellularLocation>
        <location evidence="1">Cytoplasm</location>
    </subcellularLocation>
</comment>
<comment type="similarity">
    <text evidence="1">Belongs to the RuvC family.</text>
</comment>
<sequence length="180" mass="18648">MRILGIDPGLRVTGFGVIDVSGHQLAYVASGVIKTPTADLPTRLGTIYDGVSTLIREHTPDQAAIEKVFVNVNPQSTLLLGQARGAAICGLVSGGLPVAEYTALQLKQAVVGYGRATKEQMQEMVARLLSLSGRPGTDAADALGMAICHAHGGNTLNTLGGIAPALAKKGLRVRRGRLVG</sequence>
<keyword id="KW-0963">Cytoplasm</keyword>
<keyword id="KW-0227">DNA damage</keyword>
<keyword id="KW-0233">DNA recombination</keyword>
<keyword id="KW-0234">DNA repair</keyword>
<keyword id="KW-0238">DNA-binding</keyword>
<keyword id="KW-0255">Endonuclease</keyword>
<keyword id="KW-0378">Hydrolase</keyword>
<keyword id="KW-0460">Magnesium</keyword>
<keyword id="KW-0479">Metal-binding</keyword>
<keyword id="KW-0540">Nuclease</keyword>
<keyword id="KW-1185">Reference proteome</keyword>
<feature type="chain" id="PRO_0000225126" description="Crossover junction endodeoxyribonuclease RuvC">
    <location>
        <begin position="1"/>
        <end position="180"/>
    </location>
</feature>
<feature type="active site" evidence="1">
    <location>
        <position position="7"/>
    </location>
</feature>
<feature type="active site" evidence="1">
    <location>
        <position position="66"/>
    </location>
</feature>
<feature type="active site" evidence="1">
    <location>
        <position position="138"/>
    </location>
</feature>
<feature type="binding site" evidence="1">
    <location>
        <position position="7"/>
    </location>
    <ligand>
        <name>Mg(2+)</name>
        <dbReference type="ChEBI" id="CHEBI:18420"/>
        <label>1</label>
    </ligand>
</feature>
<feature type="binding site" evidence="1">
    <location>
        <position position="66"/>
    </location>
    <ligand>
        <name>Mg(2+)</name>
        <dbReference type="ChEBI" id="CHEBI:18420"/>
        <label>2</label>
    </ligand>
</feature>
<feature type="binding site" evidence="1">
    <location>
        <position position="138"/>
    </location>
    <ligand>
        <name>Mg(2+)</name>
        <dbReference type="ChEBI" id="CHEBI:18420"/>
        <label>1</label>
    </ligand>
</feature>
<evidence type="ECO:0000255" key="1">
    <source>
        <dbReference type="HAMAP-Rule" id="MF_00034"/>
    </source>
</evidence>
<name>RUVC_BURPS</name>
<organism>
    <name type="scientific">Burkholderia pseudomallei (strain K96243)</name>
    <dbReference type="NCBI Taxonomy" id="272560"/>
    <lineage>
        <taxon>Bacteria</taxon>
        <taxon>Pseudomonadati</taxon>
        <taxon>Pseudomonadota</taxon>
        <taxon>Betaproteobacteria</taxon>
        <taxon>Burkholderiales</taxon>
        <taxon>Burkholderiaceae</taxon>
        <taxon>Burkholderia</taxon>
        <taxon>pseudomallei group</taxon>
    </lineage>
</organism>
<dbReference type="EC" id="3.1.21.10" evidence="1"/>
<dbReference type="EMBL" id="BX571965">
    <property type="protein sequence ID" value="CAH36907.1"/>
    <property type="molecule type" value="Genomic_DNA"/>
</dbReference>
<dbReference type="RefSeq" id="WP_004196340.1">
    <property type="nucleotide sequence ID" value="NZ_CP009538.1"/>
</dbReference>
<dbReference type="RefSeq" id="YP_109491.1">
    <property type="nucleotide sequence ID" value="NC_006350.1"/>
</dbReference>
<dbReference type="SMR" id="Q63QX7"/>
<dbReference type="STRING" id="272560.BPSL2897"/>
<dbReference type="GeneID" id="93061492"/>
<dbReference type="KEGG" id="bps:BPSL2897"/>
<dbReference type="PATRIC" id="fig|272560.51.peg.2392"/>
<dbReference type="eggNOG" id="COG0817">
    <property type="taxonomic scope" value="Bacteria"/>
</dbReference>
<dbReference type="Proteomes" id="UP000000605">
    <property type="component" value="Chromosome 1"/>
</dbReference>
<dbReference type="GO" id="GO:0005737">
    <property type="term" value="C:cytoplasm"/>
    <property type="evidence" value="ECO:0007669"/>
    <property type="project" value="UniProtKB-SubCell"/>
</dbReference>
<dbReference type="GO" id="GO:0048476">
    <property type="term" value="C:Holliday junction resolvase complex"/>
    <property type="evidence" value="ECO:0007669"/>
    <property type="project" value="UniProtKB-UniRule"/>
</dbReference>
<dbReference type="GO" id="GO:0008821">
    <property type="term" value="F:crossover junction DNA endonuclease activity"/>
    <property type="evidence" value="ECO:0007669"/>
    <property type="project" value="UniProtKB-UniRule"/>
</dbReference>
<dbReference type="GO" id="GO:0003677">
    <property type="term" value="F:DNA binding"/>
    <property type="evidence" value="ECO:0007669"/>
    <property type="project" value="UniProtKB-KW"/>
</dbReference>
<dbReference type="GO" id="GO:0000287">
    <property type="term" value="F:magnesium ion binding"/>
    <property type="evidence" value="ECO:0007669"/>
    <property type="project" value="UniProtKB-UniRule"/>
</dbReference>
<dbReference type="GO" id="GO:0006310">
    <property type="term" value="P:DNA recombination"/>
    <property type="evidence" value="ECO:0007669"/>
    <property type="project" value="UniProtKB-UniRule"/>
</dbReference>
<dbReference type="GO" id="GO:0006281">
    <property type="term" value="P:DNA repair"/>
    <property type="evidence" value="ECO:0007669"/>
    <property type="project" value="UniProtKB-UniRule"/>
</dbReference>
<dbReference type="CDD" id="cd16962">
    <property type="entry name" value="RuvC"/>
    <property type="match status" value="1"/>
</dbReference>
<dbReference type="FunFam" id="3.30.420.10:FF:000002">
    <property type="entry name" value="Crossover junction endodeoxyribonuclease RuvC"/>
    <property type="match status" value="1"/>
</dbReference>
<dbReference type="Gene3D" id="3.30.420.10">
    <property type="entry name" value="Ribonuclease H-like superfamily/Ribonuclease H"/>
    <property type="match status" value="1"/>
</dbReference>
<dbReference type="HAMAP" id="MF_00034">
    <property type="entry name" value="RuvC"/>
    <property type="match status" value="1"/>
</dbReference>
<dbReference type="InterPro" id="IPR012337">
    <property type="entry name" value="RNaseH-like_sf"/>
</dbReference>
<dbReference type="InterPro" id="IPR036397">
    <property type="entry name" value="RNaseH_sf"/>
</dbReference>
<dbReference type="InterPro" id="IPR020563">
    <property type="entry name" value="X-over_junc_endoDNase_Mg_BS"/>
</dbReference>
<dbReference type="InterPro" id="IPR002176">
    <property type="entry name" value="X-over_junc_endoDNase_RuvC"/>
</dbReference>
<dbReference type="NCBIfam" id="TIGR00228">
    <property type="entry name" value="ruvC"/>
    <property type="match status" value="1"/>
</dbReference>
<dbReference type="PANTHER" id="PTHR30194">
    <property type="entry name" value="CROSSOVER JUNCTION ENDODEOXYRIBONUCLEASE RUVC"/>
    <property type="match status" value="1"/>
</dbReference>
<dbReference type="PANTHER" id="PTHR30194:SF3">
    <property type="entry name" value="CROSSOVER JUNCTION ENDODEOXYRIBONUCLEASE RUVC"/>
    <property type="match status" value="1"/>
</dbReference>
<dbReference type="Pfam" id="PF02075">
    <property type="entry name" value="RuvC"/>
    <property type="match status" value="1"/>
</dbReference>
<dbReference type="PRINTS" id="PR00696">
    <property type="entry name" value="RSOLVASERUVC"/>
</dbReference>
<dbReference type="SUPFAM" id="SSF53098">
    <property type="entry name" value="Ribonuclease H-like"/>
    <property type="match status" value="1"/>
</dbReference>
<dbReference type="PROSITE" id="PS01321">
    <property type="entry name" value="RUVC"/>
    <property type="match status" value="1"/>
</dbReference>
<proteinExistence type="inferred from homology"/>
<accession>Q63QX7</accession>
<reference key="1">
    <citation type="journal article" date="2004" name="Proc. Natl. Acad. Sci. U.S.A.">
        <title>Genomic plasticity of the causative agent of melioidosis, Burkholderia pseudomallei.</title>
        <authorList>
            <person name="Holden M.T.G."/>
            <person name="Titball R.W."/>
            <person name="Peacock S.J."/>
            <person name="Cerdeno-Tarraga A.-M."/>
            <person name="Atkins T."/>
            <person name="Crossman L.C."/>
            <person name="Pitt T."/>
            <person name="Churcher C."/>
            <person name="Mungall K.L."/>
            <person name="Bentley S.D."/>
            <person name="Sebaihia M."/>
            <person name="Thomson N.R."/>
            <person name="Bason N."/>
            <person name="Beacham I.R."/>
            <person name="Brooks K."/>
            <person name="Brown K.A."/>
            <person name="Brown N.F."/>
            <person name="Challis G.L."/>
            <person name="Cherevach I."/>
            <person name="Chillingworth T."/>
            <person name="Cronin A."/>
            <person name="Crossett B."/>
            <person name="Davis P."/>
            <person name="DeShazer D."/>
            <person name="Feltwell T."/>
            <person name="Fraser A."/>
            <person name="Hance Z."/>
            <person name="Hauser H."/>
            <person name="Holroyd S."/>
            <person name="Jagels K."/>
            <person name="Keith K.E."/>
            <person name="Maddison M."/>
            <person name="Moule S."/>
            <person name="Price C."/>
            <person name="Quail M.A."/>
            <person name="Rabbinowitsch E."/>
            <person name="Rutherford K."/>
            <person name="Sanders M."/>
            <person name="Simmonds M."/>
            <person name="Songsivilai S."/>
            <person name="Stevens K."/>
            <person name="Tumapa S."/>
            <person name="Vesaratchavest M."/>
            <person name="Whitehead S."/>
            <person name="Yeats C."/>
            <person name="Barrell B.G."/>
            <person name="Oyston P.C.F."/>
            <person name="Parkhill J."/>
        </authorList>
    </citation>
    <scope>NUCLEOTIDE SEQUENCE [LARGE SCALE GENOMIC DNA]</scope>
    <source>
        <strain>K96243</strain>
    </source>
</reference>